<organism>
    <name type="scientific">Endomicrobium trichonymphae</name>
    <dbReference type="NCBI Taxonomy" id="1408204"/>
    <lineage>
        <taxon>Bacteria</taxon>
        <taxon>Pseudomonadati</taxon>
        <taxon>Elusimicrobiota</taxon>
        <taxon>Endomicrobiia</taxon>
        <taxon>Endomicrobiales</taxon>
        <taxon>Endomicrobiaceae</taxon>
        <taxon>Candidatus Endomicrobiellum</taxon>
    </lineage>
</organism>
<gene>
    <name evidence="1" type="primary">ribH</name>
    <name type="ordered locus">TGRD_528</name>
</gene>
<protein>
    <recommendedName>
        <fullName evidence="1">6,7-dimethyl-8-ribityllumazine synthase</fullName>
        <shortName evidence="1">DMRL synthase</shortName>
        <shortName evidence="1">LS</shortName>
        <shortName evidence="1">Lumazine synthase</shortName>
        <ecNumber evidence="1">2.5.1.78</ecNumber>
    </recommendedName>
</protein>
<comment type="function">
    <text evidence="1">Catalyzes the formation of 6,7-dimethyl-8-ribityllumazine by condensation of 5-amino-6-(D-ribitylamino)uracil with 3,4-dihydroxy-2-butanone 4-phosphate. This is the penultimate step in the biosynthesis of riboflavin.</text>
</comment>
<comment type="catalytic activity">
    <reaction evidence="1">
        <text>(2S)-2-hydroxy-3-oxobutyl phosphate + 5-amino-6-(D-ribitylamino)uracil = 6,7-dimethyl-8-(1-D-ribityl)lumazine + phosphate + 2 H2O + H(+)</text>
        <dbReference type="Rhea" id="RHEA:26152"/>
        <dbReference type="ChEBI" id="CHEBI:15377"/>
        <dbReference type="ChEBI" id="CHEBI:15378"/>
        <dbReference type="ChEBI" id="CHEBI:15934"/>
        <dbReference type="ChEBI" id="CHEBI:43474"/>
        <dbReference type="ChEBI" id="CHEBI:58201"/>
        <dbReference type="ChEBI" id="CHEBI:58830"/>
        <dbReference type="EC" id="2.5.1.78"/>
    </reaction>
</comment>
<comment type="pathway">
    <text evidence="1">Cofactor biosynthesis; riboflavin biosynthesis; riboflavin from 2-hydroxy-3-oxobutyl phosphate and 5-amino-6-(D-ribitylamino)uracil: step 1/2.</text>
</comment>
<comment type="similarity">
    <text evidence="1">Belongs to the DMRL synthase family.</text>
</comment>
<keyword id="KW-0686">Riboflavin biosynthesis</keyword>
<keyword id="KW-0808">Transferase</keyword>
<sequence length="153" mass="16195">MNIVTGQLNAHGKKFAIVVSRFNEFITNKLISGAEDILKRHSVADEDISVYWVPGAFEIPAVAKKIAENGKDNGVICLGCVIRGATPHFDYISAEVSKGVASIALQSNVPVIFGVLTTDSIEQAVERAGTKAGNKGSDAAMSAIEMVNLYSAI</sequence>
<accession>B1H0H9</accession>
<dbReference type="EC" id="2.5.1.78" evidence="1"/>
<dbReference type="EMBL" id="AP009510">
    <property type="protein sequence ID" value="BAG14011.1"/>
    <property type="molecule type" value="Genomic_DNA"/>
</dbReference>
<dbReference type="RefSeq" id="WP_015423536.1">
    <property type="nucleotide sequence ID" value="NC_020419.1"/>
</dbReference>
<dbReference type="SMR" id="B1H0H9"/>
<dbReference type="STRING" id="471821.TGRD_528"/>
<dbReference type="KEGG" id="rsd:TGRD_528"/>
<dbReference type="PATRIC" id="fig|471821.5.peg.862"/>
<dbReference type="HOGENOM" id="CLU_089358_1_1_0"/>
<dbReference type="UniPathway" id="UPA00275">
    <property type="reaction ID" value="UER00404"/>
</dbReference>
<dbReference type="Proteomes" id="UP000001691">
    <property type="component" value="Chromosome"/>
</dbReference>
<dbReference type="GO" id="GO:0005829">
    <property type="term" value="C:cytosol"/>
    <property type="evidence" value="ECO:0007669"/>
    <property type="project" value="TreeGrafter"/>
</dbReference>
<dbReference type="GO" id="GO:0009349">
    <property type="term" value="C:riboflavin synthase complex"/>
    <property type="evidence" value="ECO:0007669"/>
    <property type="project" value="InterPro"/>
</dbReference>
<dbReference type="GO" id="GO:0000906">
    <property type="term" value="F:6,7-dimethyl-8-ribityllumazine synthase activity"/>
    <property type="evidence" value="ECO:0007669"/>
    <property type="project" value="UniProtKB-UniRule"/>
</dbReference>
<dbReference type="GO" id="GO:0009231">
    <property type="term" value="P:riboflavin biosynthetic process"/>
    <property type="evidence" value="ECO:0007669"/>
    <property type="project" value="UniProtKB-UniRule"/>
</dbReference>
<dbReference type="CDD" id="cd09209">
    <property type="entry name" value="Lumazine_synthase-I"/>
    <property type="match status" value="1"/>
</dbReference>
<dbReference type="FunFam" id="3.40.50.960:FF:000001">
    <property type="entry name" value="6,7-dimethyl-8-ribityllumazine synthase"/>
    <property type="match status" value="1"/>
</dbReference>
<dbReference type="Gene3D" id="3.40.50.960">
    <property type="entry name" value="Lumazine/riboflavin synthase"/>
    <property type="match status" value="1"/>
</dbReference>
<dbReference type="HAMAP" id="MF_00178">
    <property type="entry name" value="Lumazine_synth"/>
    <property type="match status" value="1"/>
</dbReference>
<dbReference type="InterPro" id="IPR034964">
    <property type="entry name" value="LS"/>
</dbReference>
<dbReference type="InterPro" id="IPR002180">
    <property type="entry name" value="LS/RS"/>
</dbReference>
<dbReference type="InterPro" id="IPR036467">
    <property type="entry name" value="LS/RS_sf"/>
</dbReference>
<dbReference type="NCBIfam" id="TIGR00114">
    <property type="entry name" value="lumazine-synth"/>
    <property type="match status" value="1"/>
</dbReference>
<dbReference type="NCBIfam" id="NF000812">
    <property type="entry name" value="PRK00061.1-4"/>
    <property type="match status" value="1"/>
</dbReference>
<dbReference type="PANTHER" id="PTHR21058:SF0">
    <property type="entry name" value="6,7-DIMETHYL-8-RIBITYLLUMAZINE SYNTHASE"/>
    <property type="match status" value="1"/>
</dbReference>
<dbReference type="PANTHER" id="PTHR21058">
    <property type="entry name" value="6,7-DIMETHYL-8-RIBITYLLUMAZINE SYNTHASE DMRL SYNTHASE LUMAZINE SYNTHASE"/>
    <property type="match status" value="1"/>
</dbReference>
<dbReference type="Pfam" id="PF00885">
    <property type="entry name" value="DMRL_synthase"/>
    <property type="match status" value="1"/>
</dbReference>
<dbReference type="SUPFAM" id="SSF52121">
    <property type="entry name" value="Lumazine synthase"/>
    <property type="match status" value="1"/>
</dbReference>
<name>RISB_ENDTX</name>
<reference key="1">
    <citation type="journal article" date="2008" name="Proc. Natl. Acad. Sci. U.S.A.">
        <title>Complete genome of the uncultured termite group 1 bacteria in a single host protist cell.</title>
        <authorList>
            <person name="Hongoh Y."/>
            <person name="Sharma V.K."/>
            <person name="Prakash T."/>
            <person name="Noda S."/>
            <person name="Taylor T.D."/>
            <person name="Kudo T."/>
            <person name="Sakaki Y."/>
            <person name="Toyoda A."/>
            <person name="Hattori M."/>
            <person name="Ohkuma M."/>
        </authorList>
    </citation>
    <scope>NUCLEOTIDE SEQUENCE [LARGE SCALE GENOMIC DNA]</scope>
</reference>
<evidence type="ECO:0000255" key="1">
    <source>
        <dbReference type="HAMAP-Rule" id="MF_00178"/>
    </source>
</evidence>
<proteinExistence type="inferred from homology"/>
<feature type="chain" id="PRO_1000098247" description="6,7-dimethyl-8-ribityllumazine synthase">
    <location>
        <begin position="1"/>
        <end position="153"/>
    </location>
</feature>
<feature type="active site" description="Proton donor" evidence="1">
    <location>
        <position position="88"/>
    </location>
</feature>
<feature type="binding site" evidence="1">
    <location>
        <position position="22"/>
    </location>
    <ligand>
        <name>5-amino-6-(D-ribitylamino)uracil</name>
        <dbReference type="ChEBI" id="CHEBI:15934"/>
    </ligand>
</feature>
<feature type="binding site" evidence="1">
    <location>
        <begin position="56"/>
        <end position="58"/>
    </location>
    <ligand>
        <name>5-amino-6-(D-ribitylamino)uracil</name>
        <dbReference type="ChEBI" id="CHEBI:15934"/>
    </ligand>
</feature>
<feature type="binding site" evidence="1">
    <location>
        <begin position="80"/>
        <end position="82"/>
    </location>
    <ligand>
        <name>5-amino-6-(D-ribitylamino)uracil</name>
        <dbReference type="ChEBI" id="CHEBI:15934"/>
    </ligand>
</feature>
<feature type="binding site" evidence="1">
    <location>
        <begin position="85"/>
        <end position="86"/>
    </location>
    <ligand>
        <name>(2S)-2-hydroxy-3-oxobutyl phosphate</name>
        <dbReference type="ChEBI" id="CHEBI:58830"/>
    </ligand>
</feature>
<feature type="binding site" evidence="1">
    <location>
        <position position="113"/>
    </location>
    <ligand>
        <name>5-amino-6-(D-ribitylamino)uracil</name>
        <dbReference type="ChEBI" id="CHEBI:15934"/>
    </ligand>
</feature>
<feature type="binding site" evidence="1">
    <location>
        <position position="127"/>
    </location>
    <ligand>
        <name>(2S)-2-hydroxy-3-oxobutyl phosphate</name>
        <dbReference type="ChEBI" id="CHEBI:58830"/>
    </ligand>
</feature>